<name>RSMH_TRIEI</name>
<keyword id="KW-0963">Cytoplasm</keyword>
<keyword id="KW-0489">Methyltransferase</keyword>
<keyword id="KW-0698">rRNA processing</keyword>
<keyword id="KW-0949">S-adenosyl-L-methionine</keyword>
<keyword id="KW-0808">Transferase</keyword>
<accession>Q10VG1</accession>
<protein>
    <recommendedName>
        <fullName evidence="1">Ribosomal RNA small subunit methyltransferase H</fullName>
        <ecNumber evidence="1">2.1.1.199</ecNumber>
    </recommendedName>
    <alternativeName>
        <fullName evidence="1">16S rRNA m(4)C1402 methyltransferase</fullName>
    </alternativeName>
    <alternativeName>
        <fullName evidence="1">rRNA (cytosine-N(4)-)-methyltransferase RsmH</fullName>
    </alternativeName>
</protein>
<sequence length="283" mass="32047">MNHIPVLSSELISGLVIRPRGLYLDATLGFGGHTKLILAAAPEVKVVAIDQDKQALDSSQTLLASYNSNIQFCHSNFADYDPQNLKFDGILADLGINSVQLDTPERGFSFRHQGKLDMRMNQQQTITAAKIINHWEEVKLANIFYTYGEERLSRRIARKIIESRPLETTTELAEVVANCVPYKYRYGRIHPATRVFQALRIEVNQELSRLETFLKNAPHWLKIGGRIGIISFHSLEDRLVKHSLRNASILKVLTKKPIQPQDNEVAINPRARSAKLRLAEKLS</sequence>
<gene>
    <name evidence="1" type="primary">rsmH</name>
    <name type="synonym">mraW</name>
    <name type="ordered locus">Tery_4816</name>
</gene>
<dbReference type="EC" id="2.1.1.199" evidence="1"/>
<dbReference type="EMBL" id="CP000393">
    <property type="protein sequence ID" value="ABG53763.1"/>
    <property type="molecule type" value="Genomic_DNA"/>
</dbReference>
<dbReference type="RefSeq" id="WP_011614077.1">
    <property type="nucleotide sequence ID" value="NC_008312.1"/>
</dbReference>
<dbReference type="SMR" id="Q10VG1"/>
<dbReference type="STRING" id="203124.Tery_4816"/>
<dbReference type="KEGG" id="ter:Tery_4816"/>
<dbReference type="eggNOG" id="COG0275">
    <property type="taxonomic scope" value="Bacteria"/>
</dbReference>
<dbReference type="HOGENOM" id="CLU_038422_3_0_3"/>
<dbReference type="OrthoDB" id="9806637at2"/>
<dbReference type="GO" id="GO:0005737">
    <property type="term" value="C:cytoplasm"/>
    <property type="evidence" value="ECO:0007669"/>
    <property type="project" value="UniProtKB-SubCell"/>
</dbReference>
<dbReference type="GO" id="GO:0071424">
    <property type="term" value="F:rRNA (cytosine-N4-)-methyltransferase activity"/>
    <property type="evidence" value="ECO:0007669"/>
    <property type="project" value="UniProtKB-UniRule"/>
</dbReference>
<dbReference type="GO" id="GO:0070475">
    <property type="term" value="P:rRNA base methylation"/>
    <property type="evidence" value="ECO:0007669"/>
    <property type="project" value="UniProtKB-UniRule"/>
</dbReference>
<dbReference type="FunFam" id="1.10.150.170:FF:000003">
    <property type="entry name" value="Ribosomal RNA small subunit methyltransferase H"/>
    <property type="match status" value="1"/>
</dbReference>
<dbReference type="Gene3D" id="1.10.150.170">
    <property type="entry name" value="Putative methyltransferase TM0872, insert domain"/>
    <property type="match status" value="1"/>
</dbReference>
<dbReference type="Gene3D" id="3.40.50.150">
    <property type="entry name" value="Vaccinia Virus protein VP39"/>
    <property type="match status" value="1"/>
</dbReference>
<dbReference type="HAMAP" id="MF_01007">
    <property type="entry name" value="16SrRNA_methyltr_H"/>
    <property type="match status" value="1"/>
</dbReference>
<dbReference type="InterPro" id="IPR002903">
    <property type="entry name" value="RsmH"/>
</dbReference>
<dbReference type="InterPro" id="IPR023397">
    <property type="entry name" value="SAM-dep_MeTrfase_MraW_recog"/>
</dbReference>
<dbReference type="InterPro" id="IPR029063">
    <property type="entry name" value="SAM-dependent_MTases_sf"/>
</dbReference>
<dbReference type="NCBIfam" id="TIGR00006">
    <property type="entry name" value="16S rRNA (cytosine(1402)-N(4))-methyltransferase RsmH"/>
    <property type="match status" value="1"/>
</dbReference>
<dbReference type="PANTHER" id="PTHR11265:SF0">
    <property type="entry name" value="12S RRNA N4-METHYLCYTIDINE METHYLTRANSFERASE"/>
    <property type="match status" value="1"/>
</dbReference>
<dbReference type="PANTHER" id="PTHR11265">
    <property type="entry name" value="S-ADENOSYL-METHYLTRANSFERASE MRAW"/>
    <property type="match status" value="1"/>
</dbReference>
<dbReference type="Pfam" id="PF01795">
    <property type="entry name" value="Methyltransf_5"/>
    <property type="match status" value="1"/>
</dbReference>
<dbReference type="PIRSF" id="PIRSF004486">
    <property type="entry name" value="MraW"/>
    <property type="match status" value="1"/>
</dbReference>
<dbReference type="SUPFAM" id="SSF81799">
    <property type="entry name" value="Putative methyltransferase TM0872, insert domain"/>
    <property type="match status" value="1"/>
</dbReference>
<dbReference type="SUPFAM" id="SSF53335">
    <property type="entry name" value="S-adenosyl-L-methionine-dependent methyltransferases"/>
    <property type="match status" value="1"/>
</dbReference>
<comment type="function">
    <text evidence="1">Specifically methylates the N4 position of cytidine in position 1402 (C1402) of 16S rRNA.</text>
</comment>
<comment type="catalytic activity">
    <reaction evidence="1">
        <text>cytidine(1402) in 16S rRNA + S-adenosyl-L-methionine = N(4)-methylcytidine(1402) in 16S rRNA + S-adenosyl-L-homocysteine + H(+)</text>
        <dbReference type="Rhea" id="RHEA:42928"/>
        <dbReference type="Rhea" id="RHEA-COMP:10286"/>
        <dbReference type="Rhea" id="RHEA-COMP:10287"/>
        <dbReference type="ChEBI" id="CHEBI:15378"/>
        <dbReference type="ChEBI" id="CHEBI:57856"/>
        <dbReference type="ChEBI" id="CHEBI:59789"/>
        <dbReference type="ChEBI" id="CHEBI:74506"/>
        <dbReference type="ChEBI" id="CHEBI:82748"/>
        <dbReference type="EC" id="2.1.1.199"/>
    </reaction>
</comment>
<comment type="subcellular location">
    <subcellularLocation>
        <location evidence="1">Cytoplasm</location>
    </subcellularLocation>
</comment>
<comment type="similarity">
    <text evidence="1">Belongs to the methyltransferase superfamily. RsmH family.</text>
</comment>
<evidence type="ECO:0000255" key="1">
    <source>
        <dbReference type="HAMAP-Rule" id="MF_01007"/>
    </source>
</evidence>
<reference key="1">
    <citation type="journal article" date="2015" name="Proc. Natl. Acad. Sci. U.S.A.">
        <title>Trichodesmium genome maintains abundant, widespread noncoding DNA in situ, despite oligotrophic lifestyle.</title>
        <authorList>
            <person name="Walworth N."/>
            <person name="Pfreundt U."/>
            <person name="Nelson W.C."/>
            <person name="Mincer T."/>
            <person name="Heidelberg J.F."/>
            <person name="Fu F."/>
            <person name="Waterbury J.B."/>
            <person name="Glavina del Rio T."/>
            <person name="Goodwin L."/>
            <person name="Kyrpides N.C."/>
            <person name="Land M.L."/>
            <person name="Woyke T."/>
            <person name="Hutchins D.A."/>
            <person name="Hess W.R."/>
            <person name="Webb E.A."/>
        </authorList>
    </citation>
    <scope>NUCLEOTIDE SEQUENCE [LARGE SCALE GENOMIC DNA]</scope>
    <source>
        <strain>IMS101</strain>
    </source>
</reference>
<feature type="chain" id="PRO_0000387201" description="Ribosomal RNA small subunit methyltransferase H">
    <location>
        <begin position="1"/>
        <end position="283"/>
    </location>
</feature>
<feature type="binding site" evidence="1">
    <location>
        <begin position="31"/>
        <end position="33"/>
    </location>
    <ligand>
        <name>S-adenosyl-L-methionine</name>
        <dbReference type="ChEBI" id="CHEBI:59789"/>
    </ligand>
</feature>
<feature type="binding site" evidence="1">
    <location>
        <position position="50"/>
    </location>
    <ligand>
        <name>S-adenosyl-L-methionine</name>
        <dbReference type="ChEBI" id="CHEBI:59789"/>
    </ligand>
</feature>
<feature type="binding site" evidence="1">
    <location>
        <position position="77"/>
    </location>
    <ligand>
        <name>S-adenosyl-L-methionine</name>
        <dbReference type="ChEBI" id="CHEBI:59789"/>
    </ligand>
</feature>
<feature type="binding site" evidence="1">
    <location>
        <position position="93"/>
    </location>
    <ligand>
        <name>S-adenosyl-L-methionine</name>
        <dbReference type="ChEBI" id="CHEBI:59789"/>
    </ligand>
</feature>
<feature type="binding site" evidence="1">
    <location>
        <position position="100"/>
    </location>
    <ligand>
        <name>S-adenosyl-L-methionine</name>
        <dbReference type="ChEBI" id="CHEBI:59789"/>
    </ligand>
</feature>
<proteinExistence type="inferred from homology"/>
<organism>
    <name type="scientific">Trichodesmium erythraeum (strain IMS101)</name>
    <dbReference type="NCBI Taxonomy" id="203124"/>
    <lineage>
        <taxon>Bacteria</taxon>
        <taxon>Bacillati</taxon>
        <taxon>Cyanobacteriota</taxon>
        <taxon>Cyanophyceae</taxon>
        <taxon>Oscillatoriophycideae</taxon>
        <taxon>Oscillatoriales</taxon>
        <taxon>Microcoleaceae</taxon>
        <taxon>Trichodesmium</taxon>
    </lineage>
</organism>